<dbReference type="EMBL" id="AP003981">
    <property type="protein sequence ID" value="BAC79688.1"/>
    <property type="molecule type" value="Genomic_DNA"/>
</dbReference>
<dbReference type="EMBL" id="AP008213">
    <property type="protein sequence ID" value="BAF21950.1"/>
    <property type="molecule type" value="Genomic_DNA"/>
</dbReference>
<dbReference type="EMBL" id="AP014963">
    <property type="protein sequence ID" value="BAT02216.1"/>
    <property type="molecule type" value="Genomic_DNA"/>
</dbReference>
<dbReference type="EMBL" id="CM000144">
    <property type="protein sequence ID" value="EAZ40353.1"/>
    <property type="molecule type" value="Genomic_DNA"/>
</dbReference>
<dbReference type="RefSeq" id="XP_015646986.1">
    <property type="nucleotide sequence ID" value="XM_015791500.1"/>
</dbReference>
<dbReference type="SMR" id="Q7XII4"/>
<dbReference type="FunCoup" id="Q7XII4">
    <property type="interactions" value="812"/>
</dbReference>
<dbReference type="STRING" id="39947.Q7XII4"/>
<dbReference type="PaxDb" id="39947-Q7XII4"/>
<dbReference type="EnsemblPlants" id="Os07t0569100-01">
    <property type="protein sequence ID" value="Os07t0569100-01"/>
    <property type="gene ID" value="Os07g0569100"/>
</dbReference>
<dbReference type="Gramene" id="Os07t0569100-01">
    <property type="protein sequence ID" value="Os07t0569100-01"/>
    <property type="gene ID" value="Os07g0569100"/>
</dbReference>
<dbReference type="KEGG" id="dosa:Os07g0569100"/>
<dbReference type="eggNOG" id="ENOG502QTT4">
    <property type="taxonomic scope" value="Eukaryota"/>
</dbReference>
<dbReference type="HOGENOM" id="CLU_053612_0_0_1"/>
<dbReference type="InParanoid" id="Q7XII4"/>
<dbReference type="OMA" id="HEHETAN"/>
<dbReference type="OrthoDB" id="1939615at2759"/>
<dbReference type="Proteomes" id="UP000000763">
    <property type="component" value="Chromosome 7"/>
</dbReference>
<dbReference type="Proteomes" id="UP000007752">
    <property type="component" value="Chromosome 7"/>
</dbReference>
<dbReference type="Proteomes" id="UP000059680">
    <property type="component" value="Chromosome 7"/>
</dbReference>
<dbReference type="GO" id="GO:0005886">
    <property type="term" value="C:plasma membrane"/>
    <property type="evidence" value="ECO:0000314"/>
    <property type="project" value="UniProtKB"/>
</dbReference>
<dbReference type="GO" id="GO:0030547">
    <property type="term" value="F:signaling receptor inhibitor activity"/>
    <property type="evidence" value="ECO:0000314"/>
    <property type="project" value="GO_Central"/>
</dbReference>
<dbReference type="GO" id="GO:0009738">
    <property type="term" value="P:abscisic acid-activated signaling pathway"/>
    <property type="evidence" value="ECO:0000314"/>
    <property type="project" value="UniProtKB"/>
</dbReference>
<dbReference type="GO" id="GO:1900458">
    <property type="term" value="P:negative regulation of brassinosteroid mediated signaling pathway"/>
    <property type="evidence" value="ECO:0000315"/>
    <property type="project" value="UniProtKB"/>
</dbReference>
<dbReference type="InterPro" id="IPR005516">
    <property type="entry name" value="Remorin_C"/>
</dbReference>
<dbReference type="PANTHER" id="PTHR31471">
    <property type="entry name" value="OS02G0116800 PROTEIN"/>
    <property type="match status" value="1"/>
</dbReference>
<dbReference type="PANTHER" id="PTHR31471:SF87">
    <property type="entry name" value="REMORIN 4.2"/>
    <property type="match status" value="1"/>
</dbReference>
<dbReference type="Pfam" id="PF03763">
    <property type="entry name" value="Remorin_C"/>
    <property type="match status" value="1"/>
</dbReference>
<sequence>MLSEQTAASGSSSSSRGADDREIVISTGREIVVRSSGGEEREEEVVVEEELEEPEFRDIHALSPPPTPTPSQPSSSYHRRRRESWESAAGSRHTSIRSVGSDTAPSELFPTMSREFSAMVAAAANANAAAAAAANGGDSSRAGVDDALGRIGEDELEETNPLAIVPDSNPIPSPRRAHLALPAPGDVSSAGGGHGDEVSVGQVKKEEVESKIAAWQIAEVAKVNNRFKREEVVINGWEGDQVEKANAWLKKYERKLEEKRAKAMEKAQNEVAKARRKAEEKRASAEAKRGTKVARVLELANFMRAVGRAPSKRSFF</sequence>
<proteinExistence type="evidence at protein level"/>
<comment type="function">
    <text evidence="3">Functions in abscisic acid (ABA) signaling downstream of BZIP23. Acts as antagonistic and negative regulator of brassinosteroid (BR) signaling. Binds to BAK1 and inhibits its interaction with the BR receptor BRI1. Inhibits the formation and subsequent activation of the BRI1-BAK1 receptor complex.</text>
</comment>
<comment type="subunit">
    <text evidence="3">Interacts with BAK1.</text>
</comment>
<comment type="subcellular location">
    <subcellularLocation>
        <location evidence="3">Cell membrane</location>
        <topology evidence="5">Peripheral membrane protein</topology>
    </subcellularLocation>
</comment>
<comment type="tissue specificity">
    <text evidence="3">Expressed in roots, leaf blades and leaf sheaths. Expressed at low levels in stems and spikelets.</text>
</comment>
<comment type="induction">
    <text evidence="3">Induced by abscisic acid (ABA).</text>
</comment>
<comment type="PTM">
    <text evidence="3">Phosphorylated by BRI1. Phosphorylation reduces the binding affinity to BAK1.</text>
</comment>
<comment type="miscellaneous">
    <text evidence="3">Plants over-expressing REM4.1 are dwarf, with dark-green, short and wide flat leaf blades, short panicles, spikelets and grains, narrow bending angle of the lamina joint, and short leaf epidermis cells.</text>
</comment>
<comment type="similarity">
    <text evidence="5">Belongs to the remorin family.</text>
</comment>
<gene>
    <name evidence="4" type="primary">REM4.1</name>
    <name evidence="7" type="ordered locus">Os07g0569100</name>
    <name evidence="5" type="ordered locus">LOC_Os07g38170</name>
    <name evidence="6" type="ORF">OJ1019_E02.9</name>
    <name evidence="8" type="ORF">OsJ_24800</name>
</gene>
<keyword id="KW-0938">Abscisic acid signaling pathway</keyword>
<keyword id="KW-1003">Cell membrane</keyword>
<keyword id="KW-0175">Coiled coil</keyword>
<keyword id="KW-0472">Membrane</keyword>
<keyword id="KW-1185">Reference proteome</keyword>
<accession>Q7XII4</accession>
<evidence type="ECO:0000255" key="1"/>
<evidence type="ECO:0000256" key="2">
    <source>
        <dbReference type="SAM" id="MobiDB-lite"/>
    </source>
</evidence>
<evidence type="ECO:0000269" key="3">
    <source>
    </source>
</evidence>
<evidence type="ECO:0000303" key="4">
    <source>
    </source>
</evidence>
<evidence type="ECO:0000305" key="5"/>
<evidence type="ECO:0000312" key="6">
    <source>
        <dbReference type="EMBL" id="BAC79688.1"/>
    </source>
</evidence>
<evidence type="ECO:0000312" key="7">
    <source>
        <dbReference type="EMBL" id="BAF21950.1"/>
    </source>
</evidence>
<evidence type="ECO:0000312" key="8">
    <source>
        <dbReference type="EMBL" id="EAZ40353.1"/>
    </source>
</evidence>
<feature type="chain" id="PRO_0000439019" description="Remorin 4.1">
    <location>
        <begin position="1"/>
        <end position="316"/>
    </location>
</feature>
<feature type="region of interest" description="Disordered" evidence="2">
    <location>
        <begin position="1"/>
        <end position="108"/>
    </location>
</feature>
<feature type="region of interest" description="Disordered" evidence="2">
    <location>
        <begin position="125"/>
        <end position="202"/>
    </location>
</feature>
<feature type="region of interest" description="Disordered" evidence="2">
    <location>
        <begin position="267"/>
        <end position="287"/>
    </location>
</feature>
<feature type="coiled-coil region" evidence="1">
    <location>
        <begin position="242"/>
        <end position="288"/>
    </location>
</feature>
<feature type="compositionally biased region" description="Acidic residues" evidence="2">
    <location>
        <begin position="40"/>
        <end position="53"/>
    </location>
</feature>
<feature type="compositionally biased region" description="Polar residues" evidence="2">
    <location>
        <begin position="92"/>
        <end position="104"/>
    </location>
</feature>
<feature type="compositionally biased region" description="Low complexity" evidence="2">
    <location>
        <begin position="125"/>
        <end position="135"/>
    </location>
</feature>
<feature type="compositionally biased region" description="Basic and acidic residues" evidence="2">
    <location>
        <begin position="143"/>
        <end position="153"/>
    </location>
</feature>
<feature type="compositionally biased region" description="Basic and acidic residues" evidence="2">
    <location>
        <begin position="277"/>
        <end position="287"/>
    </location>
</feature>
<reference key="1">
    <citation type="journal article" date="2005" name="Nature">
        <title>The map-based sequence of the rice genome.</title>
        <authorList>
            <consortium name="International rice genome sequencing project (IRGSP)"/>
        </authorList>
    </citation>
    <scope>NUCLEOTIDE SEQUENCE [LARGE SCALE GENOMIC DNA]</scope>
    <source>
        <strain>cv. Nipponbare</strain>
    </source>
</reference>
<reference key="2">
    <citation type="journal article" date="2008" name="Nucleic Acids Res.">
        <title>The rice annotation project database (RAP-DB): 2008 update.</title>
        <authorList>
            <consortium name="The rice annotation project (RAP)"/>
        </authorList>
    </citation>
    <scope>GENOME REANNOTATION</scope>
    <source>
        <strain>cv. Nipponbare</strain>
    </source>
</reference>
<reference key="3">
    <citation type="journal article" date="2013" name="Rice">
        <title>Improvement of the Oryza sativa Nipponbare reference genome using next generation sequence and optical map data.</title>
        <authorList>
            <person name="Kawahara Y."/>
            <person name="de la Bastide M."/>
            <person name="Hamilton J.P."/>
            <person name="Kanamori H."/>
            <person name="McCombie W.R."/>
            <person name="Ouyang S."/>
            <person name="Schwartz D.C."/>
            <person name="Tanaka T."/>
            <person name="Wu J."/>
            <person name="Zhou S."/>
            <person name="Childs K.L."/>
            <person name="Davidson R.M."/>
            <person name="Lin H."/>
            <person name="Quesada-Ocampo L."/>
            <person name="Vaillancourt B."/>
            <person name="Sakai H."/>
            <person name="Lee S.S."/>
            <person name="Kim J."/>
            <person name="Numa H."/>
            <person name="Itoh T."/>
            <person name="Buell C.R."/>
            <person name="Matsumoto T."/>
        </authorList>
    </citation>
    <scope>GENOME REANNOTATION</scope>
    <source>
        <strain>cv. Nipponbare</strain>
    </source>
</reference>
<reference key="4">
    <citation type="journal article" date="2005" name="PLoS Biol.">
        <title>The genomes of Oryza sativa: a history of duplications.</title>
        <authorList>
            <person name="Yu J."/>
            <person name="Wang J."/>
            <person name="Lin W."/>
            <person name="Li S."/>
            <person name="Li H."/>
            <person name="Zhou J."/>
            <person name="Ni P."/>
            <person name="Dong W."/>
            <person name="Hu S."/>
            <person name="Zeng C."/>
            <person name="Zhang J."/>
            <person name="Zhang Y."/>
            <person name="Li R."/>
            <person name="Xu Z."/>
            <person name="Li S."/>
            <person name="Li X."/>
            <person name="Zheng H."/>
            <person name="Cong L."/>
            <person name="Lin L."/>
            <person name="Yin J."/>
            <person name="Geng J."/>
            <person name="Li G."/>
            <person name="Shi J."/>
            <person name="Liu J."/>
            <person name="Lv H."/>
            <person name="Li J."/>
            <person name="Wang J."/>
            <person name="Deng Y."/>
            <person name="Ran L."/>
            <person name="Shi X."/>
            <person name="Wang X."/>
            <person name="Wu Q."/>
            <person name="Li C."/>
            <person name="Ren X."/>
            <person name="Wang J."/>
            <person name="Wang X."/>
            <person name="Li D."/>
            <person name="Liu D."/>
            <person name="Zhang X."/>
            <person name="Ji Z."/>
            <person name="Zhao W."/>
            <person name="Sun Y."/>
            <person name="Zhang Z."/>
            <person name="Bao J."/>
            <person name="Han Y."/>
            <person name="Dong L."/>
            <person name="Ji J."/>
            <person name="Chen P."/>
            <person name="Wu S."/>
            <person name="Liu J."/>
            <person name="Xiao Y."/>
            <person name="Bu D."/>
            <person name="Tan J."/>
            <person name="Yang L."/>
            <person name="Ye C."/>
            <person name="Zhang J."/>
            <person name="Xu J."/>
            <person name="Zhou Y."/>
            <person name="Yu Y."/>
            <person name="Zhang B."/>
            <person name="Zhuang S."/>
            <person name="Wei H."/>
            <person name="Liu B."/>
            <person name="Lei M."/>
            <person name="Yu H."/>
            <person name="Li Y."/>
            <person name="Xu H."/>
            <person name="Wei S."/>
            <person name="He X."/>
            <person name="Fang L."/>
            <person name="Zhang Z."/>
            <person name="Zhang Y."/>
            <person name="Huang X."/>
            <person name="Su Z."/>
            <person name="Tong W."/>
            <person name="Li J."/>
            <person name="Tong Z."/>
            <person name="Li S."/>
            <person name="Ye J."/>
            <person name="Wang L."/>
            <person name="Fang L."/>
            <person name="Lei T."/>
            <person name="Chen C.-S."/>
            <person name="Chen H.-C."/>
            <person name="Xu Z."/>
            <person name="Li H."/>
            <person name="Huang H."/>
            <person name="Zhang F."/>
            <person name="Xu H."/>
            <person name="Li N."/>
            <person name="Zhao C."/>
            <person name="Li S."/>
            <person name="Dong L."/>
            <person name="Huang Y."/>
            <person name="Li L."/>
            <person name="Xi Y."/>
            <person name="Qi Q."/>
            <person name="Li W."/>
            <person name="Zhang B."/>
            <person name="Hu W."/>
            <person name="Zhang Y."/>
            <person name="Tian X."/>
            <person name="Jiao Y."/>
            <person name="Liang X."/>
            <person name="Jin J."/>
            <person name="Gao L."/>
            <person name="Zheng W."/>
            <person name="Hao B."/>
            <person name="Liu S.-M."/>
            <person name="Wang W."/>
            <person name="Yuan L."/>
            <person name="Cao M."/>
            <person name="McDermott J."/>
            <person name="Samudrala R."/>
            <person name="Wang J."/>
            <person name="Wong G.K.-S."/>
            <person name="Yang H."/>
        </authorList>
    </citation>
    <scope>NUCLEOTIDE SEQUENCE [LARGE SCALE GENOMIC DNA]</scope>
    <source>
        <strain>cv. Nipponbare</strain>
    </source>
</reference>
<reference key="5">
    <citation type="journal article" date="2007" name="Plant Physiol.">
        <title>Genome-wide annotation of remorins, a plant-specific protein family: evolutionary and functional perspectives.</title>
        <authorList>
            <person name="Raffaele S."/>
            <person name="Mongrand S."/>
            <person name="Gamas P."/>
            <person name="Niebel A."/>
            <person name="Ott T."/>
        </authorList>
    </citation>
    <scope>GENE FAMILY</scope>
    <scope>NOMENCLATURE</scope>
</reference>
<reference key="6">
    <citation type="journal article" date="2016" name="Dev. Cell">
        <title>OsREM4.1 interacts with OsSERK1 to coordinate the interlinking between abscisic acid and brassinosteroid signaling in rice.</title>
        <authorList>
            <person name="Gui J."/>
            <person name="Zheng S."/>
            <person name="Liu C."/>
            <person name="Shen J."/>
            <person name="Li J."/>
            <person name="Li L."/>
        </authorList>
    </citation>
    <scope>FUNCTION</scope>
    <scope>INTERACTION WITH BAK1</scope>
    <scope>SUBCELLULAR LOCATION</scope>
    <scope>TISSUE SPECIFICITY</scope>
    <scope>INDUCTION BY ABSCISIC ACID</scope>
    <scope>PHOSPHORYLATION</scope>
</reference>
<protein>
    <recommendedName>
        <fullName evidence="5">Remorin 4.1</fullName>
        <shortName evidence="4">OsREM4.1</shortName>
    </recommendedName>
    <alternativeName>
        <fullName evidence="4">Remorin group 4 member 1</fullName>
    </alternativeName>
</protein>
<name>REM41_ORYSJ</name>
<organism>
    <name type="scientific">Oryza sativa subsp. japonica</name>
    <name type="common">Rice</name>
    <dbReference type="NCBI Taxonomy" id="39947"/>
    <lineage>
        <taxon>Eukaryota</taxon>
        <taxon>Viridiplantae</taxon>
        <taxon>Streptophyta</taxon>
        <taxon>Embryophyta</taxon>
        <taxon>Tracheophyta</taxon>
        <taxon>Spermatophyta</taxon>
        <taxon>Magnoliopsida</taxon>
        <taxon>Liliopsida</taxon>
        <taxon>Poales</taxon>
        <taxon>Poaceae</taxon>
        <taxon>BOP clade</taxon>
        <taxon>Oryzoideae</taxon>
        <taxon>Oryzeae</taxon>
        <taxon>Oryzinae</taxon>
        <taxon>Oryza</taxon>
        <taxon>Oryza sativa</taxon>
    </lineage>
</organism>